<comment type="function">
    <text evidence="1">Involved in the import of serine and threonine into the cell, with the concomitant import of sodium (symport system).</text>
</comment>
<comment type="catalytic activity">
    <reaction evidence="1">
        <text>L-serine(in) + Na(+)(in) = L-serine(out) + Na(+)(out)</text>
        <dbReference type="Rhea" id="RHEA:29575"/>
        <dbReference type="ChEBI" id="CHEBI:29101"/>
        <dbReference type="ChEBI" id="CHEBI:33384"/>
    </reaction>
    <physiologicalReaction direction="right-to-left" evidence="1">
        <dbReference type="Rhea" id="RHEA:29577"/>
    </physiologicalReaction>
</comment>
<comment type="catalytic activity">
    <reaction evidence="1">
        <text>L-threonine(in) + Na(+)(in) = L-threonine(out) + Na(+)(out)</text>
        <dbReference type="Rhea" id="RHEA:69999"/>
        <dbReference type="ChEBI" id="CHEBI:29101"/>
        <dbReference type="ChEBI" id="CHEBI:57926"/>
    </reaction>
    <physiologicalReaction direction="right-to-left" evidence="1">
        <dbReference type="Rhea" id="RHEA:70001"/>
    </physiologicalReaction>
</comment>
<comment type="subcellular location">
    <subcellularLocation>
        <location evidence="1">Cell inner membrane</location>
        <topology evidence="1">Multi-pass membrane protein</topology>
    </subcellularLocation>
</comment>
<comment type="similarity">
    <text evidence="1">Belongs to the dicarboxylate/amino acid:cation symporter (DAACS) (TC 2.A.23) family.</text>
</comment>
<evidence type="ECO:0000255" key="1">
    <source>
        <dbReference type="HAMAP-Rule" id="MF_01582"/>
    </source>
</evidence>
<keyword id="KW-0029">Amino-acid transport</keyword>
<keyword id="KW-0997">Cell inner membrane</keyword>
<keyword id="KW-1003">Cell membrane</keyword>
<keyword id="KW-0472">Membrane</keyword>
<keyword id="KW-0769">Symport</keyword>
<keyword id="KW-0812">Transmembrane</keyword>
<keyword id="KW-1133">Transmembrane helix</keyword>
<keyword id="KW-0813">Transport</keyword>
<reference key="1">
    <citation type="journal article" date="2008" name="BMC Genomics">
        <title>The genome of Aeromonas salmonicida subsp. salmonicida A449: insights into the evolution of a fish pathogen.</title>
        <authorList>
            <person name="Reith M.E."/>
            <person name="Singh R.K."/>
            <person name="Curtis B."/>
            <person name="Boyd J.M."/>
            <person name="Bouevitch A."/>
            <person name="Kimball J."/>
            <person name="Munholland J."/>
            <person name="Murphy C."/>
            <person name="Sarty D."/>
            <person name="Williams J."/>
            <person name="Nash J.H."/>
            <person name="Johnson S.C."/>
            <person name="Brown L.L."/>
        </authorList>
    </citation>
    <scope>NUCLEOTIDE SEQUENCE [LARGE SCALE GENOMIC DNA]</scope>
    <source>
        <strain>A449</strain>
    </source>
</reference>
<sequence length="416" mass="43318">MTQQHPLMRLVNSTSLVSQILVGLVFGILLAMFMPEWAKAAGLLGSLFVGALKAVAPLLVFVLVMAAIIGHKQGQKSNMKPILLLYLLGTFLAAAVAVVASFLFPSNLHLVASSAEITPPGGITEVLQTLLFNVVTNPVKALMDANYIGILAWAIGLGIAMRHANDSTKAMITDLSHGVSTIVKAVIRCAPLGILGLVASTLAETGFDALFGYAHLLVVLIGCMLFIAFVVNPIIVFWKIRRNPYPLVLTCLKESGVTAFFTRSSAANIPVNMTLCEKLRLPEDTYAVSIPLGATINMAGAAITITVLSMAAVHTLGMEVDLATAVLLSVVATISACGASGVAGGSLLLIPLACSLFGIGNDIAMQVVAVGFIIGVLQDSAETALNSSTDVLFTAAACMAEDETLLDAASLPSREA</sequence>
<name>SSTT_AERS4</name>
<accession>A4SN74</accession>
<feature type="chain" id="PRO_0000309074" description="Serine/threonine transporter SstT">
    <location>
        <begin position="1"/>
        <end position="416"/>
    </location>
</feature>
<feature type="transmembrane region" description="Helical" evidence="1">
    <location>
        <begin position="15"/>
        <end position="35"/>
    </location>
</feature>
<feature type="transmembrane region" description="Helical" evidence="1">
    <location>
        <begin position="49"/>
        <end position="69"/>
    </location>
</feature>
<feature type="transmembrane region" description="Helical" evidence="1">
    <location>
        <begin position="82"/>
        <end position="102"/>
    </location>
</feature>
<feature type="transmembrane region" description="Helical" evidence="1">
    <location>
        <begin position="141"/>
        <end position="161"/>
    </location>
</feature>
<feature type="transmembrane region" description="Helical" evidence="1">
    <location>
        <begin position="192"/>
        <end position="212"/>
    </location>
</feature>
<feature type="transmembrane region" description="Helical" evidence="1">
    <location>
        <begin position="217"/>
        <end position="237"/>
    </location>
</feature>
<feature type="transmembrane region" description="Helical" evidence="1">
    <location>
        <begin position="288"/>
        <end position="308"/>
    </location>
</feature>
<feature type="transmembrane region" description="Helical" evidence="1">
    <location>
        <begin position="330"/>
        <end position="350"/>
    </location>
</feature>
<feature type="transmembrane region" description="Helical" evidence="1">
    <location>
        <begin position="356"/>
        <end position="376"/>
    </location>
</feature>
<dbReference type="EMBL" id="CP000644">
    <property type="protein sequence ID" value="ABO90346.1"/>
    <property type="molecule type" value="Genomic_DNA"/>
</dbReference>
<dbReference type="RefSeq" id="WP_005311019.1">
    <property type="nucleotide sequence ID" value="NC_009348.1"/>
</dbReference>
<dbReference type="SMR" id="A4SN74"/>
<dbReference type="STRING" id="29491.GCA_000820065_01632"/>
<dbReference type="KEGG" id="asa:ASA_2296"/>
<dbReference type="eggNOG" id="COG3633">
    <property type="taxonomic scope" value="Bacteria"/>
</dbReference>
<dbReference type="HOGENOM" id="CLU_044581_0_0_6"/>
<dbReference type="Proteomes" id="UP000000225">
    <property type="component" value="Chromosome"/>
</dbReference>
<dbReference type="GO" id="GO:0005886">
    <property type="term" value="C:plasma membrane"/>
    <property type="evidence" value="ECO:0007669"/>
    <property type="project" value="UniProtKB-SubCell"/>
</dbReference>
<dbReference type="GO" id="GO:0005295">
    <property type="term" value="F:neutral L-amino acid:sodium symporter activity"/>
    <property type="evidence" value="ECO:0007669"/>
    <property type="project" value="TreeGrafter"/>
</dbReference>
<dbReference type="GO" id="GO:0032329">
    <property type="term" value="P:serine transport"/>
    <property type="evidence" value="ECO:0007669"/>
    <property type="project" value="InterPro"/>
</dbReference>
<dbReference type="GO" id="GO:0015826">
    <property type="term" value="P:threonine transport"/>
    <property type="evidence" value="ECO:0007669"/>
    <property type="project" value="InterPro"/>
</dbReference>
<dbReference type="FunFam" id="1.10.3860.10:FF:000003">
    <property type="entry name" value="Serine/threonine transporter sstT"/>
    <property type="match status" value="1"/>
</dbReference>
<dbReference type="Gene3D" id="1.10.3860.10">
    <property type="entry name" value="Sodium:dicarboxylate symporter"/>
    <property type="match status" value="1"/>
</dbReference>
<dbReference type="HAMAP" id="MF_01582">
    <property type="entry name" value="Ser_Thr_transp_SstT"/>
    <property type="match status" value="1"/>
</dbReference>
<dbReference type="InterPro" id="IPR001991">
    <property type="entry name" value="Na-dicarboxylate_symporter"/>
</dbReference>
<dbReference type="InterPro" id="IPR036458">
    <property type="entry name" value="Na:dicarbo_symporter_sf"/>
</dbReference>
<dbReference type="InterPro" id="IPR023025">
    <property type="entry name" value="Ser_Thr_transp_SstT"/>
</dbReference>
<dbReference type="NCBIfam" id="NF010151">
    <property type="entry name" value="PRK13628.1"/>
    <property type="match status" value="1"/>
</dbReference>
<dbReference type="PANTHER" id="PTHR42865">
    <property type="entry name" value="PROTON/GLUTAMATE-ASPARTATE SYMPORTER"/>
    <property type="match status" value="1"/>
</dbReference>
<dbReference type="PANTHER" id="PTHR42865:SF8">
    <property type="entry name" value="SERINE_THREONINE TRANSPORTER SSTT"/>
    <property type="match status" value="1"/>
</dbReference>
<dbReference type="Pfam" id="PF00375">
    <property type="entry name" value="SDF"/>
    <property type="match status" value="1"/>
</dbReference>
<dbReference type="PRINTS" id="PR00173">
    <property type="entry name" value="EDTRNSPORT"/>
</dbReference>
<dbReference type="SUPFAM" id="SSF118215">
    <property type="entry name" value="Proton glutamate symport protein"/>
    <property type="match status" value="1"/>
</dbReference>
<gene>
    <name evidence="1" type="primary">sstT</name>
    <name type="ordered locus">ASA_2296</name>
</gene>
<protein>
    <recommendedName>
        <fullName evidence="1">Serine/threonine transporter SstT</fullName>
    </recommendedName>
    <alternativeName>
        <fullName evidence="1">Na(+)/serine-threonine symporter</fullName>
    </alternativeName>
</protein>
<organism>
    <name type="scientific">Aeromonas salmonicida (strain A449)</name>
    <dbReference type="NCBI Taxonomy" id="382245"/>
    <lineage>
        <taxon>Bacteria</taxon>
        <taxon>Pseudomonadati</taxon>
        <taxon>Pseudomonadota</taxon>
        <taxon>Gammaproteobacteria</taxon>
        <taxon>Aeromonadales</taxon>
        <taxon>Aeromonadaceae</taxon>
        <taxon>Aeromonas</taxon>
    </lineage>
</organism>
<proteinExistence type="inferred from homology"/>